<dbReference type="EC" id="2.5.1.145" evidence="1"/>
<dbReference type="EMBL" id="AF320250">
    <property type="protein sequence ID" value="AAL14785.1"/>
    <property type="molecule type" value="Genomic_DNA"/>
</dbReference>
<dbReference type="EMBL" id="CR954253">
    <property type="protein sequence ID" value="CAI97441.1"/>
    <property type="molecule type" value="Genomic_DNA"/>
</dbReference>
<dbReference type="RefSeq" id="WP_003618914.1">
    <property type="nucleotide sequence ID" value="NZ_JQAV01000001.1"/>
</dbReference>
<dbReference type="SMR" id="Q93FD1"/>
<dbReference type="STRING" id="390333.Ldb0611"/>
<dbReference type="KEGG" id="ldb:Ldb0611"/>
<dbReference type="PATRIC" id="fig|390333.13.peg.186"/>
<dbReference type="eggNOG" id="COG0682">
    <property type="taxonomic scope" value="Bacteria"/>
</dbReference>
<dbReference type="HOGENOM" id="CLU_013386_0_1_9"/>
<dbReference type="BioCyc" id="LDEL390333:LDB_RS02645-MONOMER"/>
<dbReference type="UniPathway" id="UPA00664"/>
<dbReference type="Proteomes" id="UP000001259">
    <property type="component" value="Chromosome"/>
</dbReference>
<dbReference type="GO" id="GO:0005886">
    <property type="term" value="C:plasma membrane"/>
    <property type="evidence" value="ECO:0007669"/>
    <property type="project" value="UniProtKB-SubCell"/>
</dbReference>
<dbReference type="GO" id="GO:0008961">
    <property type="term" value="F:phosphatidylglycerol-prolipoprotein diacylglyceryl transferase activity"/>
    <property type="evidence" value="ECO:0007669"/>
    <property type="project" value="UniProtKB-UniRule"/>
</dbReference>
<dbReference type="GO" id="GO:0042158">
    <property type="term" value="P:lipoprotein biosynthetic process"/>
    <property type="evidence" value="ECO:0007669"/>
    <property type="project" value="UniProtKB-UniRule"/>
</dbReference>
<dbReference type="HAMAP" id="MF_01147">
    <property type="entry name" value="Lgt"/>
    <property type="match status" value="1"/>
</dbReference>
<dbReference type="InterPro" id="IPR001640">
    <property type="entry name" value="Lgt"/>
</dbReference>
<dbReference type="NCBIfam" id="TIGR00544">
    <property type="entry name" value="lgt"/>
    <property type="match status" value="1"/>
</dbReference>
<dbReference type="PANTHER" id="PTHR30589:SF0">
    <property type="entry name" value="PHOSPHATIDYLGLYCEROL--PROLIPOPROTEIN DIACYLGLYCERYL TRANSFERASE"/>
    <property type="match status" value="1"/>
</dbReference>
<dbReference type="PANTHER" id="PTHR30589">
    <property type="entry name" value="PROLIPOPROTEIN DIACYLGLYCERYL TRANSFERASE"/>
    <property type="match status" value="1"/>
</dbReference>
<dbReference type="Pfam" id="PF01790">
    <property type="entry name" value="LGT"/>
    <property type="match status" value="1"/>
</dbReference>
<dbReference type="PROSITE" id="PS01311">
    <property type="entry name" value="LGT"/>
    <property type="match status" value="1"/>
</dbReference>
<gene>
    <name evidence="1" type="primary">lgt</name>
    <name type="ordered locus">Ldb0611</name>
</gene>
<organism>
    <name type="scientific">Lactobacillus delbrueckii subsp. bulgaricus (strain ATCC 11842 / DSM 20081 / BCRC 10696 / JCM 1002 / NBRC 13953 / NCIMB 11778 / NCTC 12712 / WDCM 00102 / Lb 14)</name>
    <dbReference type="NCBI Taxonomy" id="390333"/>
    <lineage>
        <taxon>Bacteria</taxon>
        <taxon>Bacillati</taxon>
        <taxon>Bacillota</taxon>
        <taxon>Bacilli</taxon>
        <taxon>Lactobacillales</taxon>
        <taxon>Lactobacillaceae</taxon>
        <taxon>Lactobacillus</taxon>
    </lineage>
</organism>
<reference key="1">
    <citation type="submission" date="2000-11" db="EMBL/GenBank/DDBJ databases">
        <title>L. bulgaricus ymdA-uvrA region.</title>
        <authorList>
            <person name="van de Guchte M."/>
            <person name="Dervyn R."/>
            <person name="Ehrlich S.D."/>
            <person name="Maguin E."/>
        </authorList>
    </citation>
    <scope>NUCLEOTIDE SEQUENCE [GENOMIC DNA]</scope>
</reference>
<reference key="2">
    <citation type="journal article" date="2006" name="Proc. Natl. Acad. Sci. U.S.A.">
        <title>The complete genome sequence of Lactobacillus bulgaricus reveals extensive and ongoing reductive evolution.</title>
        <authorList>
            <person name="van de Guchte M."/>
            <person name="Penaud S."/>
            <person name="Grimaldi C."/>
            <person name="Barbe V."/>
            <person name="Bryson K."/>
            <person name="Nicolas P."/>
            <person name="Robert C."/>
            <person name="Oztas S."/>
            <person name="Mangenot S."/>
            <person name="Couloux A."/>
            <person name="Loux V."/>
            <person name="Dervyn R."/>
            <person name="Bossy R."/>
            <person name="Bolotin A."/>
            <person name="Batto J.-M."/>
            <person name="Walunas T."/>
            <person name="Gibrat J.-F."/>
            <person name="Bessieres P."/>
            <person name="Weissenbach J."/>
            <person name="Ehrlich S.D."/>
            <person name="Maguin E."/>
        </authorList>
    </citation>
    <scope>NUCLEOTIDE SEQUENCE [LARGE SCALE GENOMIC DNA]</scope>
    <source>
        <strain>ATCC 11842 / DSM 20081 / BCRC 10696 / JCM 1002 / NBRC 13953 / NCIMB 11778 / NCTC 12712 / WDCM 00102 / Lb 14</strain>
    </source>
</reference>
<proteinExistence type="inferred from homology"/>
<evidence type="ECO:0000255" key="1">
    <source>
        <dbReference type="HAMAP-Rule" id="MF_01147"/>
    </source>
</evidence>
<sequence>MTLALNPIAFSIGDIHVRWYGIIIACGILLATFMSIREGQRRQIMSDDFIDLLLWGVPIGFIGARIYYVIFEWGYFSQHPDEIIAIWNGGIAIYGGLIAGAIVLLVFCYRRFLPPFLVLDIVAPGVMAAQVLGRWGNFMNQEAHGAKCSLQYLQNLHLPQFIIDQMYINGSYYKPTFLYESFFNLIGLIIILSLRHKKHLFKQGEVFMLYLAWYSVVRFFVEGMRTDSLYIFGVIRVSQALSLLLLIAVVILFVYRRVKVKPKWYLEGSGLKYPYER</sequence>
<name>LGT_LACDA</name>
<comment type="function">
    <text evidence="1">Catalyzes the transfer of the diacylglyceryl group from phosphatidylglycerol to the sulfhydryl group of the N-terminal cysteine of a prolipoprotein, the first step in the formation of mature lipoproteins.</text>
</comment>
<comment type="catalytic activity">
    <reaction evidence="1">
        <text>L-cysteinyl-[prolipoprotein] + a 1,2-diacyl-sn-glycero-3-phospho-(1'-sn-glycerol) = an S-1,2-diacyl-sn-glyceryl-L-cysteinyl-[prolipoprotein] + sn-glycerol 1-phosphate + H(+)</text>
        <dbReference type="Rhea" id="RHEA:56712"/>
        <dbReference type="Rhea" id="RHEA-COMP:14679"/>
        <dbReference type="Rhea" id="RHEA-COMP:14680"/>
        <dbReference type="ChEBI" id="CHEBI:15378"/>
        <dbReference type="ChEBI" id="CHEBI:29950"/>
        <dbReference type="ChEBI" id="CHEBI:57685"/>
        <dbReference type="ChEBI" id="CHEBI:64716"/>
        <dbReference type="ChEBI" id="CHEBI:140658"/>
        <dbReference type="EC" id="2.5.1.145"/>
    </reaction>
</comment>
<comment type="pathway">
    <text evidence="1">Protein modification; lipoprotein biosynthesis (diacylglyceryl transfer).</text>
</comment>
<comment type="subcellular location">
    <subcellularLocation>
        <location evidence="1">Cell membrane</location>
        <topology evidence="1">Multi-pass membrane protein</topology>
    </subcellularLocation>
</comment>
<comment type="similarity">
    <text evidence="1">Belongs to the Lgt family.</text>
</comment>
<accession>Q93FD1</accession>
<accession>Q1GB41</accession>
<keyword id="KW-1003">Cell membrane</keyword>
<keyword id="KW-0472">Membrane</keyword>
<keyword id="KW-1185">Reference proteome</keyword>
<keyword id="KW-0808">Transferase</keyword>
<keyword id="KW-0812">Transmembrane</keyword>
<keyword id="KW-1133">Transmembrane helix</keyword>
<protein>
    <recommendedName>
        <fullName evidence="1">Phosphatidylglycerol--prolipoprotein diacylglyceryl transferase</fullName>
        <ecNumber evidence="1">2.5.1.145</ecNumber>
    </recommendedName>
</protein>
<feature type="chain" id="PRO_0000172616" description="Phosphatidylglycerol--prolipoprotein diacylglyceryl transferase">
    <location>
        <begin position="1"/>
        <end position="277"/>
    </location>
</feature>
<feature type="transmembrane region" description="Helical" evidence="1">
    <location>
        <begin position="15"/>
        <end position="35"/>
    </location>
</feature>
<feature type="transmembrane region" description="Helical" evidence="1">
    <location>
        <begin position="50"/>
        <end position="70"/>
    </location>
</feature>
<feature type="transmembrane region" description="Helical" evidence="1">
    <location>
        <begin position="89"/>
        <end position="109"/>
    </location>
</feature>
<feature type="transmembrane region" description="Helical" evidence="1">
    <location>
        <begin position="112"/>
        <end position="132"/>
    </location>
</feature>
<feature type="transmembrane region" description="Helical" evidence="1">
    <location>
        <begin position="174"/>
        <end position="194"/>
    </location>
</feature>
<feature type="transmembrane region" description="Helical" evidence="1">
    <location>
        <begin position="204"/>
        <end position="224"/>
    </location>
</feature>
<feature type="transmembrane region" description="Helical" evidence="1">
    <location>
        <begin position="234"/>
        <end position="254"/>
    </location>
</feature>
<feature type="binding site" evidence="1">
    <location>
        <position position="134"/>
    </location>
    <ligand>
        <name>a 1,2-diacyl-sn-glycero-3-phospho-(1'-sn-glycerol)</name>
        <dbReference type="ChEBI" id="CHEBI:64716"/>
    </ligand>
</feature>